<evidence type="ECO:0000255" key="1">
    <source>
        <dbReference type="HAMAP-Rule" id="MF_00510"/>
    </source>
</evidence>
<accession>B7MJ04</accession>
<protein>
    <recommendedName>
        <fullName evidence="1">Peptidase E</fullName>
        <ecNumber evidence="1">3.4.13.21</ecNumber>
    </recommendedName>
    <alternativeName>
        <fullName evidence="1">Alpha-aspartyl dipeptidase</fullName>
    </alternativeName>
    <alternativeName>
        <fullName evidence="1">Asp-specific dipeptidase</fullName>
    </alternativeName>
    <alternativeName>
        <fullName evidence="1">Dipeptidase E</fullName>
    </alternativeName>
</protein>
<keyword id="KW-0963">Cytoplasm</keyword>
<keyword id="KW-0224">Dipeptidase</keyword>
<keyword id="KW-0378">Hydrolase</keyword>
<keyword id="KW-0645">Protease</keyword>
<keyword id="KW-1185">Reference proteome</keyword>
<keyword id="KW-0720">Serine protease</keyword>
<organism>
    <name type="scientific">Escherichia coli O45:K1 (strain S88 / ExPEC)</name>
    <dbReference type="NCBI Taxonomy" id="585035"/>
    <lineage>
        <taxon>Bacteria</taxon>
        <taxon>Pseudomonadati</taxon>
        <taxon>Pseudomonadota</taxon>
        <taxon>Gammaproteobacteria</taxon>
        <taxon>Enterobacterales</taxon>
        <taxon>Enterobacteriaceae</taxon>
        <taxon>Escherichia</taxon>
    </lineage>
</organism>
<feature type="chain" id="PRO_1000127240" description="Peptidase E">
    <location>
        <begin position="1"/>
        <end position="229"/>
    </location>
</feature>
<feature type="active site" description="Charge relay system" evidence="1">
    <location>
        <position position="120"/>
    </location>
</feature>
<feature type="active site" description="Charge relay system" evidence="1">
    <location>
        <position position="135"/>
    </location>
</feature>
<feature type="active site" description="Charge relay system" evidence="1">
    <location>
        <position position="157"/>
    </location>
</feature>
<name>PEPE_ECO45</name>
<proteinExistence type="inferred from homology"/>
<comment type="function">
    <text evidence="1">Hydrolyzes dipeptides containing N-terminal aspartate residues. May play a role in allowing the cell to use peptide aspartate to spare carbon otherwise required for the synthesis of the aspartate family of amino acids.</text>
</comment>
<comment type="catalytic activity">
    <reaction evidence="1">
        <text>Dipeptidase E catalyzes the hydrolysis of dipeptides Asp-|-Xaa. It does not act on peptides with N-terminal Glu, Asn or Gln, nor does it cleave isoaspartyl peptides.</text>
        <dbReference type="EC" id="3.4.13.21"/>
    </reaction>
</comment>
<comment type="subcellular location">
    <subcellularLocation>
        <location evidence="1">Cytoplasm</location>
    </subcellularLocation>
</comment>
<comment type="similarity">
    <text evidence="1">Belongs to the peptidase S51 family.</text>
</comment>
<gene>
    <name evidence="1" type="primary">pepE</name>
    <name type="ordered locus">ECS88_4487</name>
</gene>
<reference key="1">
    <citation type="journal article" date="2009" name="PLoS Genet.">
        <title>Organised genome dynamics in the Escherichia coli species results in highly diverse adaptive paths.</title>
        <authorList>
            <person name="Touchon M."/>
            <person name="Hoede C."/>
            <person name="Tenaillon O."/>
            <person name="Barbe V."/>
            <person name="Baeriswyl S."/>
            <person name="Bidet P."/>
            <person name="Bingen E."/>
            <person name="Bonacorsi S."/>
            <person name="Bouchier C."/>
            <person name="Bouvet O."/>
            <person name="Calteau A."/>
            <person name="Chiapello H."/>
            <person name="Clermont O."/>
            <person name="Cruveiller S."/>
            <person name="Danchin A."/>
            <person name="Diard M."/>
            <person name="Dossat C."/>
            <person name="Karoui M.E."/>
            <person name="Frapy E."/>
            <person name="Garry L."/>
            <person name="Ghigo J.M."/>
            <person name="Gilles A.M."/>
            <person name="Johnson J."/>
            <person name="Le Bouguenec C."/>
            <person name="Lescat M."/>
            <person name="Mangenot S."/>
            <person name="Martinez-Jehanne V."/>
            <person name="Matic I."/>
            <person name="Nassif X."/>
            <person name="Oztas S."/>
            <person name="Petit M.A."/>
            <person name="Pichon C."/>
            <person name="Rouy Z."/>
            <person name="Ruf C.S."/>
            <person name="Schneider D."/>
            <person name="Tourret J."/>
            <person name="Vacherie B."/>
            <person name="Vallenet D."/>
            <person name="Medigue C."/>
            <person name="Rocha E.P.C."/>
            <person name="Denamur E."/>
        </authorList>
    </citation>
    <scope>NUCLEOTIDE SEQUENCE [LARGE SCALE GENOMIC DNA]</scope>
    <source>
        <strain>S88 / ExPEC</strain>
    </source>
</reference>
<sequence length="229" mass="24570">MELLLLSNSTLPGKAWLEHALPLIAEQLQGRRSAVFIPFAGVTQTWDDYTAKTAAVLAPLGVSVTGIHSVVDPVAAIENAEIVIVGGGNTFQLLKQCRERGLLAPITDVVKRGALYIGWSAGANLACPTIRTTNDMPIVDPQGFDALNLFPLQINPHFTNALPEGHKGETREQRIRELLVVAPELTIIGLPEGNWITVSKGHATLGGPNTTYVFKAGEEAVPLEAGHRF</sequence>
<dbReference type="EC" id="3.4.13.21" evidence="1"/>
<dbReference type="EMBL" id="CU928161">
    <property type="protein sequence ID" value="CAR05648.1"/>
    <property type="molecule type" value="Genomic_DNA"/>
</dbReference>
<dbReference type="RefSeq" id="WP_000421763.1">
    <property type="nucleotide sequence ID" value="NC_011742.1"/>
</dbReference>
<dbReference type="SMR" id="B7MJ04"/>
<dbReference type="MEROPS" id="S51.001"/>
<dbReference type="GeneID" id="93777874"/>
<dbReference type="KEGG" id="ecz:ECS88_4487"/>
<dbReference type="HOGENOM" id="CLU_071689_0_0_6"/>
<dbReference type="Proteomes" id="UP000000747">
    <property type="component" value="Chromosome"/>
</dbReference>
<dbReference type="GO" id="GO:0005737">
    <property type="term" value="C:cytoplasm"/>
    <property type="evidence" value="ECO:0007669"/>
    <property type="project" value="UniProtKB-SubCell"/>
</dbReference>
<dbReference type="GO" id="GO:0016805">
    <property type="term" value="F:dipeptidase activity"/>
    <property type="evidence" value="ECO:0007669"/>
    <property type="project" value="UniProtKB-UniRule"/>
</dbReference>
<dbReference type="GO" id="GO:0008236">
    <property type="term" value="F:serine-type peptidase activity"/>
    <property type="evidence" value="ECO:0007669"/>
    <property type="project" value="UniProtKB-KW"/>
</dbReference>
<dbReference type="GO" id="GO:0006508">
    <property type="term" value="P:proteolysis"/>
    <property type="evidence" value="ECO:0007669"/>
    <property type="project" value="UniProtKB-UniRule"/>
</dbReference>
<dbReference type="CDD" id="cd03146">
    <property type="entry name" value="GAT1_Peptidase_E"/>
    <property type="match status" value="1"/>
</dbReference>
<dbReference type="FunFam" id="3.40.50.880:FF:000007">
    <property type="entry name" value="Peptidase E"/>
    <property type="match status" value="1"/>
</dbReference>
<dbReference type="Gene3D" id="3.40.50.880">
    <property type="match status" value="1"/>
</dbReference>
<dbReference type="HAMAP" id="MF_00510">
    <property type="entry name" value="Peptidase_E"/>
    <property type="match status" value="1"/>
</dbReference>
<dbReference type="InterPro" id="IPR029062">
    <property type="entry name" value="Class_I_gatase-like"/>
</dbReference>
<dbReference type="InterPro" id="IPR005320">
    <property type="entry name" value="Peptidase_S51"/>
</dbReference>
<dbReference type="InterPro" id="IPR023172">
    <property type="entry name" value="Peptidase_S51_dipeptidase-E"/>
</dbReference>
<dbReference type="NCBIfam" id="NF003642">
    <property type="entry name" value="PRK05282.1"/>
    <property type="match status" value="1"/>
</dbReference>
<dbReference type="PANTHER" id="PTHR20842:SF0">
    <property type="entry name" value="ALPHA-ASPARTYL DIPEPTIDASE"/>
    <property type="match status" value="1"/>
</dbReference>
<dbReference type="PANTHER" id="PTHR20842">
    <property type="entry name" value="PROTEASE S51 ALPHA-ASPARTYL DIPEPTIDASE"/>
    <property type="match status" value="1"/>
</dbReference>
<dbReference type="Pfam" id="PF03575">
    <property type="entry name" value="Peptidase_S51"/>
    <property type="match status" value="1"/>
</dbReference>
<dbReference type="SUPFAM" id="SSF52317">
    <property type="entry name" value="Class I glutamine amidotransferase-like"/>
    <property type="match status" value="1"/>
</dbReference>